<name>RS9_HELHP</name>
<gene>
    <name evidence="1" type="primary">rpsI</name>
    <name type="ordered locus">HH_0499</name>
</gene>
<reference key="1">
    <citation type="journal article" date="2003" name="Proc. Natl. Acad. Sci. U.S.A.">
        <title>The complete genome sequence of the carcinogenic bacterium Helicobacter hepaticus.</title>
        <authorList>
            <person name="Suerbaum S."/>
            <person name="Josenhans C."/>
            <person name="Sterzenbach T."/>
            <person name="Drescher B."/>
            <person name="Brandt P."/>
            <person name="Bell M."/>
            <person name="Droege M."/>
            <person name="Fartmann B."/>
            <person name="Fischer H.-P."/>
            <person name="Ge Z."/>
            <person name="Hoerster A."/>
            <person name="Holland R."/>
            <person name="Klein K."/>
            <person name="Koenig J."/>
            <person name="Macko L."/>
            <person name="Mendz G.L."/>
            <person name="Nyakatura G."/>
            <person name="Schauer D.B."/>
            <person name="Shen Z."/>
            <person name="Weber J."/>
            <person name="Frosch M."/>
            <person name="Fox J.G."/>
        </authorList>
    </citation>
    <scope>NUCLEOTIDE SEQUENCE [LARGE SCALE GENOMIC DNA]</scope>
    <source>
        <strain>ATCC 51449 / 3B1</strain>
    </source>
</reference>
<comment type="similarity">
    <text evidence="1">Belongs to the universal ribosomal protein uS9 family.</text>
</comment>
<accession>Q7VIV5</accession>
<keyword id="KW-1185">Reference proteome</keyword>
<keyword id="KW-0687">Ribonucleoprotein</keyword>
<keyword id="KW-0689">Ribosomal protein</keyword>
<dbReference type="EMBL" id="AE017125">
    <property type="protein sequence ID" value="AAP77096.1"/>
    <property type="molecule type" value="Genomic_DNA"/>
</dbReference>
<dbReference type="RefSeq" id="WP_011115341.1">
    <property type="nucleotide sequence ID" value="NC_004917.1"/>
</dbReference>
<dbReference type="SMR" id="Q7VIV5"/>
<dbReference type="STRING" id="235279.HH_0499"/>
<dbReference type="KEGG" id="hhe:HH_0499"/>
<dbReference type="eggNOG" id="COG0103">
    <property type="taxonomic scope" value="Bacteria"/>
</dbReference>
<dbReference type="HOGENOM" id="CLU_046483_2_1_7"/>
<dbReference type="OrthoDB" id="9803965at2"/>
<dbReference type="Proteomes" id="UP000002495">
    <property type="component" value="Chromosome"/>
</dbReference>
<dbReference type="GO" id="GO:0022627">
    <property type="term" value="C:cytosolic small ribosomal subunit"/>
    <property type="evidence" value="ECO:0007669"/>
    <property type="project" value="TreeGrafter"/>
</dbReference>
<dbReference type="GO" id="GO:0003723">
    <property type="term" value="F:RNA binding"/>
    <property type="evidence" value="ECO:0007669"/>
    <property type="project" value="TreeGrafter"/>
</dbReference>
<dbReference type="GO" id="GO:0003735">
    <property type="term" value="F:structural constituent of ribosome"/>
    <property type="evidence" value="ECO:0007669"/>
    <property type="project" value="InterPro"/>
</dbReference>
<dbReference type="GO" id="GO:0006412">
    <property type="term" value="P:translation"/>
    <property type="evidence" value="ECO:0007669"/>
    <property type="project" value="UniProtKB-UniRule"/>
</dbReference>
<dbReference type="FunFam" id="3.30.230.10:FF:000025">
    <property type="entry name" value="30S ribosomal protein S9"/>
    <property type="match status" value="1"/>
</dbReference>
<dbReference type="Gene3D" id="3.30.230.10">
    <property type="match status" value="1"/>
</dbReference>
<dbReference type="HAMAP" id="MF_00532_B">
    <property type="entry name" value="Ribosomal_uS9_B"/>
    <property type="match status" value="1"/>
</dbReference>
<dbReference type="InterPro" id="IPR020568">
    <property type="entry name" value="Ribosomal_Su5_D2-typ_SF"/>
</dbReference>
<dbReference type="InterPro" id="IPR000754">
    <property type="entry name" value="Ribosomal_uS9"/>
</dbReference>
<dbReference type="InterPro" id="IPR023035">
    <property type="entry name" value="Ribosomal_uS9_bac/plastid"/>
</dbReference>
<dbReference type="InterPro" id="IPR020574">
    <property type="entry name" value="Ribosomal_uS9_CS"/>
</dbReference>
<dbReference type="InterPro" id="IPR014721">
    <property type="entry name" value="Ribsml_uS5_D2-typ_fold_subgr"/>
</dbReference>
<dbReference type="NCBIfam" id="NF001099">
    <property type="entry name" value="PRK00132.1"/>
    <property type="match status" value="1"/>
</dbReference>
<dbReference type="PANTHER" id="PTHR21569">
    <property type="entry name" value="RIBOSOMAL PROTEIN S9"/>
    <property type="match status" value="1"/>
</dbReference>
<dbReference type="PANTHER" id="PTHR21569:SF1">
    <property type="entry name" value="SMALL RIBOSOMAL SUBUNIT PROTEIN US9M"/>
    <property type="match status" value="1"/>
</dbReference>
<dbReference type="Pfam" id="PF00380">
    <property type="entry name" value="Ribosomal_S9"/>
    <property type="match status" value="1"/>
</dbReference>
<dbReference type="SUPFAM" id="SSF54211">
    <property type="entry name" value="Ribosomal protein S5 domain 2-like"/>
    <property type="match status" value="1"/>
</dbReference>
<dbReference type="PROSITE" id="PS00360">
    <property type="entry name" value="RIBOSOMAL_S9"/>
    <property type="match status" value="1"/>
</dbReference>
<evidence type="ECO:0000255" key="1">
    <source>
        <dbReference type="HAMAP-Rule" id="MF_00532"/>
    </source>
</evidence>
<evidence type="ECO:0000305" key="2"/>
<organism>
    <name type="scientific">Helicobacter hepaticus (strain ATCC 51449 / 3B1)</name>
    <dbReference type="NCBI Taxonomy" id="235279"/>
    <lineage>
        <taxon>Bacteria</taxon>
        <taxon>Pseudomonadati</taxon>
        <taxon>Campylobacterota</taxon>
        <taxon>Epsilonproteobacteria</taxon>
        <taxon>Campylobacterales</taxon>
        <taxon>Helicobacteraceae</taxon>
        <taxon>Helicobacter</taxon>
    </lineage>
</organism>
<proteinExistence type="inferred from homology"/>
<sequence length="129" mass="14280">MAKVYATGKRKTAIAKVWLTSGSGKLNINGQSLNDWLGGHEAIKMKVMQPLILTKQEKSVDIHAVTLGGGYSAQAEALRHGISKALNAYDVAFRAMLKPKGLLTRDSRVVERKKYGKRKARRSPQFSKR</sequence>
<feature type="chain" id="PRO_0000111363" description="Small ribosomal subunit protein uS9">
    <location>
        <begin position="1"/>
        <end position="129"/>
    </location>
</feature>
<protein>
    <recommendedName>
        <fullName evidence="1">Small ribosomal subunit protein uS9</fullName>
    </recommendedName>
    <alternativeName>
        <fullName evidence="2">30S ribosomal protein S9</fullName>
    </alternativeName>
</protein>